<accession>Q9K083</accession>
<name>UBIA_NEIMB</name>
<gene>
    <name evidence="1" type="primary">ubiA</name>
    <name type="ordered locus">NMB0735</name>
</gene>
<protein>
    <recommendedName>
        <fullName evidence="1">4-hydroxybenzoate octaprenyltransferase</fullName>
        <ecNumber evidence="1">2.5.1.39</ecNumber>
    </recommendedName>
    <alternativeName>
        <fullName evidence="1">4-HB polyprenyltransferase</fullName>
    </alternativeName>
</protein>
<evidence type="ECO:0000255" key="1">
    <source>
        <dbReference type="HAMAP-Rule" id="MF_01635"/>
    </source>
</evidence>
<sequence length="296" mass="33150">MNPKSPLFLRLSDRLDVYLRLMRADKPIGTLLLLWPTYWALWLASDGIPDLAVLAAFTIGTFLMRSAGCVINDFADRDFDGAVERTKNRPFAQGRVKKKEALLLTAFLCLLAALCLIPLNHLTWLMSLPALFLALTYPFTKRFFPIPQLYLGLAFSFGIPMAFAAVAGNVPPQAWILFAANVLWTLAYDTVYAMADKEDDLKIGIKTSAVTFGRYDIAAVMLCHGGFTLLMAVLGAVIGAAWAYWTAIPIVLLLQYRQYAAIKSRVRQICFETFLANNRIGWVWFTAIFAHTFFAK</sequence>
<reference key="1">
    <citation type="journal article" date="2000" name="Science">
        <title>Complete genome sequence of Neisseria meningitidis serogroup B strain MC58.</title>
        <authorList>
            <person name="Tettelin H."/>
            <person name="Saunders N.J."/>
            <person name="Heidelberg J.F."/>
            <person name="Jeffries A.C."/>
            <person name="Nelson K.E."/>
            <person name="Eisen J.A."/>
            <person name="Ketchum K.A."/>
            <person name="Hood D.W."/>
            <person name="Peden J.F."/>
            <person name="Dodson R.J."/>
            <person name="Nelson W.C."/>
            <person name="Gwinn M.L."/>
            <person name="DeBoy R.T."/>
            <person name="Peterson J.D."/>
            <person name="Hickey E.K."/>
            <person name="Haft D.H."/>
            <person name="Salzberg S.L."/>
            <person name="White O."/>
            <person name="Fleischmann R.D."/>
            <person name="Dougherty B.A."/>
            <person name="Mason T.M."/>
            <person name="Ciecko A."/>
            <person name="Parksey D.S."/>
            <person name="Blair E."/>
            <person name="Cittone H."/>
            <person name="Clark E.B."/>
            <person name="Cotton M.D."/>
            <person name="Utterback T.R."/>
            <person name="Khouri H.M."/>
            <person name="Qin H."/>
            <person name="Vamathevan J.J."/>
            <person name="Gill J."/>
            <person name="Scarlato V."/>
            <person name="Masignani V."/>
            <person name="Pizza M."/>
            <person name="Grandi G."/>
            <person name="Sun L."/>
            <person name="Smith H.O."/>
            <person name="Fraser C.M."/>
            <person name="Moxon E.R."/>
            <person name="Rappuoli R."/>
            <person name="Venter J.C."/>
        </authorList>
    </citation>
    <scope>NUCLEOTIDE SEQUENCE [LARGE SCALE GENOMIC DNA]</scope>
    <source>
        <strain>ATCC BAA-335 / MC58</strain>
    </source>
</reference>
<dbReference type="EC" id="2.5.1.39" evidence="1"/>
<dbReference type="EMBL" id="AE002098">
    <property type="protein sequence ID" value="AAF41148.1"/>
    <property type="molecule type" value="Genomic_DNA"/>
</dbReference>
<dbReference type="PIR" id="G81164">
    <property type="entry name" value="G81164"/>
</dbReference>
<dbReference type="RefSeq" id="NP_273777.1">
    <property type="nucleotide sequence ID" value="NC_003112.2"/>
</dbReference>
<dbReference type="RefSeq" id="WP_002214069.1">
    <property type="nucleotide sequence ID" value="NC_003112.2"/>
</dbReference>
<dbReference type="SMR" id="Q9K083"/>
<dbReference type="FunCoup" id="Q9K083">
    <property type="interactions" value="374"/>
</dbReference>
<dbReference type="STRING" id="122586.NMB0735"/>
<dbReference type="PaxDb" id="122586-NMB0735"/>
<dbReference type="KEGG" id="nme:NMB0735"/>
<dbReference type="PATRIC" id="fig|122586.8.peg.935"/>
<dbReference type="HOGENOM" id="CLU_034879_1_0_4"/>
<dbReference type="InParanoid" id="Q9K083"/>
<dbReference type="OrthoDB" id="9782418at2"/>
<dbReference type="UniPathway" id="UPA00232"/>
<dbReference type="Proteomes" id="UP000000425">
    <property type="component" value="Chromosome"/>
</dbReference>
<dbReference type="GO" id="GO:0005886">
    <property type="term" value="C:plasma membrane"/>
    <property type="evidence" value="ECO:0000318"/>
    <property type="project" value="GO_Central"/>
</dbReference>
<dbReference type="GO" id="GO:0008412">
    <property type="term" value="F:4-hydroxybenzoate polyprenyltransferase activity"/>
    <property type="evidence" value="ECO:0007669"/>
    <property type="project" value="UniProtKB-UniRule"/>
</dbReference>
<dbReference type="GO" id="GO:0016765">
    <property type="term" value="F:transferase activity, transferring alkyl or aryl (other than methyl) groups"/>
    <property type="evidence" value="ECO:0000318"/>
    <property type="project" value="GO_Central"/>
</dbReference>
<dbReference type="GO" id="GO:0006744">
    <property type="term" value="P:ubiquinone biosynthetic process"/>
    <property type="evidence" value="ECO:0000318"/>
    <property type="project" value="GO_Central"/>
</dbReference>
<dbReference type="CDD" id="cd13959">
    <property type="entry name" value="PT_UbiA_COQ2"/>
    <property type="match status" value="1"/>
</dbReference>
<dbReference type="FunFam" id="1.10.357.140:FF:000002">
    <property type="entry name" value="4-hydroxybenzoate octaprenyltransferase"/>
    <property type="match status" value="1"/>
</dbReference>
<dbReference type="FunFam" id="1.20.120.1780:FF:000001">
    <property type="entry name" value="4-hydroxybenzoate octaprenyltransferase"/>
    <property type="match status" value="1"/>
</dbReference>
<dbReference type="Gene3D" id="1.10.357.140">
    <property type="entry name" value="UbiA prenyltransferase"/>
    <property type="match status" value="1"/>
</dbReference>
<dbReference type="Gene3D" id="1.20.120.1780">
    <property type="entry name" value="UbiA prenyltransferase"/>
    <property type="match status" value="1"/>
</dbReference>
<dbReference type="HAMAP" id="MF_01635">
    <property type="entry name" value="UbiA"/>
    <property type="match status" value="1"/>
</dbReference>
<dbReference type="InterPro" id="IPR006370">
    <property type="entry name" value="HB_polyprenyltransferase-like"/>
</dbReference>
<dbReference type="InterPro" id="IPR039653">
    <property type="entry name" value="Prenyltransferase"/>
</dbReference>
<dbReference type="InterPro" id="IPR000537">
    <property type="entry name" value="UbiA_prenyltransferase"/>
</dbReference>
<dbReference type="InterPro" id="IPR030470">
    <property type="entry name" value="UbiA_prenylTrfase_CS"/>
</dbReference>
<dbReference type="InterPro" id="IPR044878">
    <property type="entry name" value="UbiA_sf"/>
</dbReference>
<dbReference type="NCBIfam" id="TIGR01474">
    <property type="entry name" value="ubiA_proteo"/>
    <property type="match status" value="1"/>
</dbReference>
<dbReference type="PANTHER" id="PTHR11048:SF28">
    <property type="entry name" value="4-HYDROXYBENZOATE POLYPRENYLTRANSFERASE, MITOCHONDRIAL"/>
    <property type="match status" value="1"/>
</dbReference>
<dbReference type="PANTHER" id="PTHR11048">
    <property type="entry name" value="PRENYLTRANSFERASES"/>
    <property type="match status" value="1"/>
</dbReference>
<dbReference type="Pfam" id="PF01040">
    <property type="entry name" value="UbiA"/>
    <property type="match status" value="1"/>
</dbReference>
<dbReference type="PROSITE" id="PS00943">
    <property type="entry name" value="UBIA"/>
    <property type="match status" value="1"/>
</dbReference>
<organism>
    <name type="scientific">Neisseria meningitidis serogroup B (strain ATCC BAA-335 / MC58)</name>
    <dbReference type="NCBI Taxonomy" id="122586"/>
    <lineage>
        <taxon>Bacteria</taxon>
        <taxon>Pseudomonadati</taxon>
        <taxon>Pseudomonadota</taxon>
        <taxon>Betaproteobacteria</taxon>
        <taxon>Neisseriales</taxon>
        <taxon>Neisseriaceae</taxon>
        <taxon>Neisseria</taxon>
    </lineage>
</organism>
<feature type="chain" id="PRO_0000262810" description="4-hydroxybenzoate octaprenyltransferase">
    <location>
        <begin position="1"/>
        <end position="296"/>
    </location>
</feature>
<feature type="transmembrane region" description="Helical" evidence="1">
    <location>
        <begin position="28"/>
        <end position="48"/>
    </location>
</feature>
<feature type="transmembrane region" description="Helical" evidence="1">
    <location>
        <begin position="51"/>
        <end position="71"/>
    </location>
</feature>
<feature type="transmembrane region" description="Helical" evidence="1">
    <location>
        <begin position="102"/>
        <end position="122"/>
    </location>
</feature>
<feature type="transmembrane region" description="Helical" evidence="1">
    <location>
        <begin position="143"/>
        <end position="163"/>
    </location>
</feature>
<feature type="transmembrane region" description="Helical" evidence="1">
    <location>
        <begin position="174"/>
        <end position="194"/>
    </location>
</feature>
<feature type="transmembrane region" description="Helical" evidence="1">
    <location>
        <begin position="212"/>
        <end position="232"/>
    </location>
</feature>
<feature type="transmembrane region" description="Helical" evidence="1">
    <location>
        <begin position="233"/>
        <end position="253"/>
    </location>
</feature>
<feature type="transmembrane region" description="Helical" evidence="1">
    <location>
        <begin position="274"/>
        <end position="294"/>
    </location>
</feature>
<proteinExistence type="inferred from homology"/>
<comment type="function">
    <text evidence="1">Catalyzes the prenylation of para-hydroxybenzoate (PHB) with an all-trans polyprenyl group. Mediates the second step in the final reaction sequence of ubiquinone-8 (UQ-8) biosynthesis, which is the condensation of the polyisoprenoid side chain with PHB, generating the first membrane-bound Q intermediate 3-octaprenyl-4-hydroxybenzoate.</text>
</comment>
<comment type="catalytic activity">
    <reaction evidence="1">
        <text>all-trans-octaprenyl diphosphate + 4-hydroxybenzoate = 4-hydroxy-3-(all-trans-octaprenyl)benzoate + diphosphate</text>
        <dbReference type="Rhea" id="RHEA:27782"/>
        <dbReference type="ChEBI" id="CHEBI:1617"/>
        <dbReference type="ChEBI" id="CHEBI:17879"/>
        <dbReference type="ChEBI" id="CHEBI:33019"/>
        <dbReference type="ChEBI" id="CHEBI:57711"/>
        <dbReference type="EC" id="2.5.1.39"/>
    </reaction>
</comment>
<comment type="cofactor">
    <cofactor evidence="1">
        <name>Mg(2+)</name>
        <dbReference type="ChEBI" id="CHEBI:18420"/>
    </cofactor>
</comment>
<comment type="pathway">
    <text evidence="1">Cofactor biosynthesis; ubiquinone biosynthesis.</text>
</comment>
<comment type="subcellular location">
    <subcellularLocation>
        <location evidence="1">Cell inner membrane</location>
        <topology evidence="1">Multi-pass membrane protein</topology>
    </subcellularLocation>
</comment>
<comment type="similarity">
    <text evidence="1">Belongs to the UbiA prenyltransferase family.</text>
</comment>
<keyword id="KW-0997">Cell inner membrane</keyword>
<keyword id="KW-1003">Cell membrane</keyword>
<keyword id="KW-0460">Magnesium</keyword>
<keyword id="KW-0472">Membrane</keyword>
<keyword id="KW-1185">Reference proteome</keyword>
<keyword id="KW-0808">Transferase</keyword>
<keyword id="KW-0812">Transmembrane</keyword>
<keyword id="KW-1133">Transmembrane helix</keyword>
<keyword id="KW-0831">Ubiquinone biosynthesis</keyword>